<accession>P85321</accession>
<feature type="chain" id="PRO_0000314065" description="Pregnancy-associated glycoprotein 50C">
    <location>
        <begin position="1"/>
        <end position="12" status="greater than"/>
    </location>
</feature>
<feature type="glycosylation site" description="N-linked (GlcNAc...) asparagine" evidence="2">
    <location>
        <position position="9"/>
    </location>
</feature>
<feature type="non-terminal residue" evidence="3">
    <location>
        <position position="12"/>
    </location>
</feature>
<reference key="1">
    <citation type="journal article" date="2009" name="Anim. Reprod. Sci.">
        <title>Identification of multiple pregnancy-associated glycoproteins (PAGs) purified from the European bison (Eb; Bison bonasus L.) placentas.</title>
        <authorList>
            <person name="Kiewisz J."/>
            <person name="Melo de Sousa N."/>
            <person name="Beckers J.-F.M.P."/>
            <person name="Panasiewicz G."/>
            <person name="Gizejewski Z."/>
            <person name="Szafranska B."/>
        </authorList>
    </citation>
    <scope>PROTEIN SEQUENCE</scope>
    <scope>TISSUE SPECIFICITY</scope>
    <scope>DEVELOPMENTAL STAGE</scope>
    <scope>GLYCOSYLATION AT ASN-9</scope>
    <source>
        <tissue>Placenta</tissue>
    </source>
</reference>
<evidence type="ECO:0000255" key="1"/>
<evidence type="ECO:0000269" key="2">
    <source>
    </source>
</evidence>
<evidence type="ECO:0000303" key="3">
    <source>
    </source>
</evidence>
<evidence type="ECO:0000305" key="4"/>
<organism>
    <name type="scientific">Bison bonasus</name>
    <name type="common">European bison</name>
    <dbReference type="NCBI Taxonomy" id="9902"/>
    <lineage>
        <taxon>Eukaryota</taxon>
        <taxon>Metazoa</taxon>
        <taxon>Chordata</taxon>
        <taxon>Craniata</taxon>
        <taxon>Vertebrata</taxon>
        <taxon>Euteleostomi</taxon>
        <taxon>Mammalia</taxon>
        <taxon>Eutheria</taxon>
        <taxon>Laurasiatheria</taxon>
        <taxon>Artiodactyla</taxon>
        <taxon>Ruminantia</taxon>
        <taxon>Pecora</taxon>
        <taxon>Bovidae</taxon>
        <taxon>Bovinae</taxon>
        <taxon>Bison</taxon>
    </lineage>
</organism>
<protein>
    <recommendedName>
        <fullName>Pregnancy-associated glycoprotein 50C</fullName>
        <ecNumber>3.4.23.-</ecNumber>
    </recommendedName>
    <alternativeName>
        <fullName>EbPAG-C 50 kDa</fullName>
    </alternativeName>
</protein>
<sequence>SQISLRGSNLTI</sequence>
<comment type="subcellular location">
    <subcellularLocation>
        <location evidence="4">Secreted</location>
        <location evidence="4">Extracellular space</location>
    </subcellularLocation>
</comment>
<comment type="tissue specificity">
    <text evidence="2">Chorionic epithelium (trophectoderm) and placental cotyledons.</text>
</comment>
<comment type="developmental stage">
    <text evidence="2">Expressed at 45 dpc.</text>
</comment>
<comment type="miscellaneous">
    <text evidence="2">On the 2D-gel the determined pI of this protein is: 5.7, its MW is: 50 kDa.</text>
</comment>
<comment type="similarity">
    <text evidence="1">Belongs to the peptidase A1 family.</text>
</comment>
<dbReference type="EC" id="3.4.23.-"/>
<dbReference type="iPTMnet" id="P85321"/>
<dbReference type="GO" id="GO:0005576">
    <property type="term" value="C:extracellular region"/>
    <property type="evidence" value="ECO:0007669"/>
    <property type="project" value="UniProtKB-SubCell"/>
</dbReference>
<dbReference type="GO" id="GO:0004190">
    <property type="term" value="F:aspartic-type endopeptidase activity"/>
    <property type="evidence" value="ECO:0007669"/>
    <property type="project" value="UniProtKB-KW"/>
</dbReference>
<dbReference type="GO" id="GO:0006508">
    <property type="term" value="P:proteolysis"/>
    <property type="evidence" value="ECO:0007669"/>
    <property type="project" value="UniProtKB-KW"/>
</dbReference>
<name>PA50C_BISBO</name>
<keyword id="KW-0064">Aspartyl protease</keyword>
<keyword id="KW-0903">Direct protein sequencing</keyword>
<keyword id="KW-0325">Glycoprotein</keyword>
<keyword id="KW-0378">Hydrolase</keyword>
<keyword id="KW-0645">Protease</keyword>
<keyword id="KW-0964">Secreted</keyword>
<proteinExistence type="evidence at protein level"/>